<sequence>MQVILLEKVINLGSLGDIVRVKDGYARNFLIPTKRARRATQSAIAEFEVKRAELEKVAAEKLAAAQAEGEKLNGLTVQITQKSGVDGRLFGSVTNADIAEALAGQGFKLEKAQVRMPSGPLKVVGDHPVSVALHTDVVVDVTVAVLGEHV</sequence>
<gene>
    <name evidence="1" type="primary">rplI</name>
    <name type="ordered locus">Rmet_1976</name>
</gene>
<proteinExistence type="inferred from homology"/>
<reference key="1">
    <citation type="journal article" date="2010" name="PLoS ONE">
        <title>The complete genome sequence of Cupriavidus metallidurans strain CH34, a master survivalist in harsh and anthropogenic environments.</title>
        <authorList>
            <person name="Janssen P.J."/>
            <person name="Van Houdt R."/>
            <person name="Moors H."/>
            <person name="Monsieurs P."/>
            <person name="Morin N."/>
            <person name="Michaux A."/>
            <person name="Benotmane M.A."/>
            <person name="Leys N."/>
            <person name="Vallaeys T."/>
            <person name="Lapidus A."/>
            <person name="Monchy S."/>
            <person name="Medigue C."/>
            <person name="Taghavi S."/>
            <person name="McCorkle S."/>
            <person name="Dunn J."/>
            <person name="van der Lelie D."/>
            <person name="Mergeay M."/>
        </authorList>
    </citation>
    <scope>NUCLEOTIDE SEQUENCE [LARGE SCALE GENOMIC DNA]</scope>
    <source>
        <strain>ATCC 43123 / DSM 2839 / NBRC 102507 / CH34</strain>
    </source>
</reference>
<evidence type="ECO:0000255" key="1">
    <source>
        <dbReference type="HAMAP-Rule" id="MF_00503"/>
    </source>
</evidence>
<evidence type="ECO:0000305" key="2"/>
<name>RL9_CUPMC</name>
<accession>Q1LLX1</accession>
<feature type="chain" id="PRO_0000258478" description="Large ribosomal subunit protein bL9">
    <location>
        <begin position="1"/>
        <end position="150"/>
    </location>
</feature>
<comment type="function">
    <text evidence="1">Binds to the 23S rRNA.</text>
</comment>
<comment type="similarity">
    <text evidence="1">Belongs to the bacterial ribosomal protein bL9 family.</text>
</comment>
<organism>
    <name type="scientific">Cupriavidus metallidurans (strain ATCC 43123 / DSM 2839 / NBRC 102507 / CH34)</name>
    <name type="common">Ralstonia metallidurans</name>
    <dbReference type="NCBI Taxonomy" id="266264"/>
    <lineage>
        <taxon>Bacteria</taxon>
        <taxon>Pseudomonadati</taxon>
        <taxon>Pseudomonadota</taxon>
        <taxon>Betaproteobacteria</taxon>
        <taxon>Burkholderiales</taxon>
        <taxon>Burkholderiaceae</taxon>
        <taxon>Cupriavidus</taxon>
    </lineage>
</organism>
<keyword id="KW-1185">Reference proteome</keyword>
<keyword id="KW-0687">Ribonucleoprotein</keyword>
<keyword id="KW-0689">Ribosomal protein</keyword>
<keyword id="KW-0694">RNA-binding</keyword>
<keyword id="KW-0699">rRNA-binding</keyword>
<dbReference type="EMBL" id="CP000352">
    <property type="protein sequence ID" value="ABF08855.1"/>
    <property type="molecule type" value="Genomic_DNA"/>
</dbReference>
<dbReference type="RefSeq" id="WP_011516698.1">
    <property type="nucleotide sequence ID" value="NC_007973.1"/>
</dbReference>
<dbReference type="SMR" id="Q1LLX1"/>
<dbReference type="STRING" id="266264.Rmet_1976"/>
<dbReference type="KEGG" id="rme:Rmet_1976"/>
<dbReference type="eggNOG" id="COG0359">
    <property type="taxonomic scope" value="Bacteria"/>
</dbReference>
<dbReference type="HOGENOM" id="CLU_078938_4_1_4"/>
<dbReference type="Proteomes" id="UP000002429">
    <property type="component" value="Chromosome"/>
</dbReference>
<dbReference type="GO" id="GO:1990904">
    <property type="term" value="C:ribonucleoprotein complex"/>
    <property type="evidence" value="ECO:0007669"/>
    <property type="project" value="UniProtKB-KW"/>
</dbReference>
<dbReference type="GO" id="GO:0005840">
    <property type="term" value="C:ribosome"/>
    <property type="evidence" value="ECO:0007669"/>
    <property type="project" value="UniProtKB-KW"/>
</dbReference>
<dbReference type="GO" id="GO:0019843">
    <property type="term" value="F:rRNA binding"/>
    <property type="evidence" value="ECO:0007669"/>
    <property type="project" value="UniProtKB-UniRule"/>
</dbReference>
<dbReference type="GO" id="GO:0003735">
    <property type="term" value="F:structural constituent of ribosome"/>
    <property type="evidence" value="ECO:0007669"/>
    <property type="project" value="InterPro"/>
</dbReference>
<dbReference type="GO" id="GO:0006412">
    <property type="term" value="P:translation"/>
    <property type="evidence" value="ECO:0007669"/>
    <property type="project" value="UniProtKB-UniRule"/>
</dbReference>
<dbReference type="Gene3D" id="3.10.430.100">
    <property type="entry name" value="Ribosomal protein L9, C-terminal domain"/>
    <property type="match status" value="1"/>
</dbReference>
<dbReference type="Gene3D" id="3.40.5.10">
    <property type="entry name" value="Ribosomal protein L9, N-terminal domain"/>
    <property type="match status" value="1"/>
</dbReference>
<dbReference type="HAMAP" id="MF_00503">
    <property type="entry name" value="Ribosomal_bL9"/>
    <property type="match status" value="1"/>
</dbReference>
<dbReference type="InterPro" id="IPR000244">
    <property type="entry name" value="Ribosomal_bL9"/>
</dbReference>
<dbReference type="InterPro" id="IPR009027">
    <property type="entry name" value="Ribosomal_bL9/RNase_H1_N"/>
</dbReference>
<dbReference type="InterPro" id="IPR020594">
    <property type="entry name" value="Ribosomal_bL9_bac/chp"/>
</dbReference>
<dbReference type="InterPro" id="IPR020069">
    <property type="entry name" value="Ribosomal_bL9_C"/>
</dbReference>
<dbReference type="InterPro" id="IPR036791">
    <property type="entry name" value="Ribosomal_bL9_C_sf"/>
</dbReference>
<dbReference type="InterPro" id="IPR020070">
    <property type="entry name" value="Ribosomal_bL9_N"/>
</dbReference>
<dbReference type="InterPro" id="IPR036935">
    <property type="entry name" value="Ribosomal_bL9_N_sf"/>
</dbReference>
<dbReference type="NCBIfam" id="TIGR00158">
    <property type="entry name" value="L9"/>
    <property type="match status" value="1"/>
</dbReference>
<dbReference type="PANTHER" id="PTHR21368">
    <property type="entry name" value="50S RIBOSOMAL PROTEIN L9"/>
    <property type="match status" value="1"/>
</dbReference>
<dbReference type="Pfam" id="PF03948">
    <property type="entry name" value="Ribosomal_L9_C"/>
    <property type="match status" value="1"/>
</dbReference>
<dbReference type="Pfam" id="PF01281">
    <property type="entry name" value="Ribosomal_L9_N"/>
    <property type="match status" value="1"/>
</dbReference>
<dbReference type="SUPFAM" id="SSF55658">
    <property type="entry name" value="L9 N-domain-like"/>
    <property type="match status" value="1"/>
</dbReference>
<dbReference type="SUPFAM" id="SSF55653">
    <property type="entry name" value="Ribosomal protein L9 C-domain"/>
    <property type="match status" value="1"/>
</dbReference>
<dbReference type="PROSITE" id="PS00651">
    <property type="entry name" value="RIBOSOMAL_L9"/>
    <property type="match status" value="1"/>
</dbReference>
<protein>
    <recommendedName>
        <fullName evidence="1">Large ribosomal subunit protein bL9</fullName>
    </recommendedName>
    <alternativeName>
        <fullName evidence="2">50S ribosomal protein L9</fullName>
    </alternativeName>
</protein>